<name>RL34_TRIEI</name>
<evidence type="ECO:0000255" key="1">
    <source>
        <dbReference type="HAMAP-Rule" id="MF_00391"/>
    </source>
</evidence>
<evidence type="ECO:0000305" key="2"/>
<dbReference type="EMBL" id="CP000393">
    <property type="protein sequence ID" value="ABG53670.1"/>
    <property type="molecule type" value="Genomic_DNA"/>
</dbReference>
<dbReference type="RefSeq" id="WP_011613987.1">
    <property type="nucleotide sequence ID" value="NC_008312.1"/>
</dbReference>
<dbReference type="SMR" id="Q10VQ4"/>
<dbReference type="STRING" id="203124.Tery_4707"/>
<dbReference type="KEGG" id="ter:Tery_4707"/>
<dbReference type="eggNOG" id="COG0230">
    <property type="taxonomic scope" value="Bacteria"/>
</dbReference>
<dbReference type="HOGENOM" id="CLU_129938_2_1_3"/>
<dbReference type="GO" id="GO:1990904">
    <property type="term" value="C:ribonucleoprotein complex"/>
    <property type="evidence" value="ECO:0007669"/>
    <property type="project" value="UniProtKB-KW"/>
</dbReference>
<dbReference type="GO" id="GO:0005840">
    <property type="term" value="C:ribosome"/>
    <property type="evidence" value="ECO:0007669"/>
    <property type="project" value="UniProtKB-KW"/>
</dbReference>
<dbReference type="GO" id="GO:0003735">
    <property type="term" value="F:structural constituent of ribosome"/>
    <property type="evidence" value="ECO:0007669"/>
    <property type="project" value="InterPro"/>
</dbReference>
<dbReference type="GO" id="GO:0006412">
    <property type="term" value="P:translation"/>
    <property type="evidence" value="ECO:0007669"/>
    <property type="project" value="UniProtKB-UniRule"/>
</dbReference>
<dbReference type="Gene3D" id="1.10.287.3980">
    <property type="match status" value="1"/>
</dbReference>
<dbReference type="HAMAP" id="MF_00391">
    <property type="entry name" value="Ribosomal_bL34"/>
    <property type="match status" value="1"/>
</dbReference>
<dbReference type="InterPro" id="IPR000271">
    <property type="entry name" value="Ribosomal_bL34"/>
</dbReference>
<dbReference type="NCBIfam" id="TIGR01030">
    <property type="entry name" value="rpmH_bact"/>
    <property type="match status" value="1"/>
</dbReference>
<dbReference type="Pfam" id="PF00468">
    <property type="entry name" value="Ribosomal_L34"/>
    <property type="match status" value="1"/>
</dbReference>
<keyword id="KW-0687">Ribonucleoprotein</keyword>
<keyword id="KW-0689">Ribosomal protein</keyword>
<sequence>MTQRTLHGTCRKRRRVSGFRVRMRTRNGRAVIRARRKKGRERLAVY</sequence>
<comment type="similarity">
    <text evidence="1">Belongs to the bacterial ribosomal protein bL34 family.</text>
</comment>
<feature type="chain" id="PRO_1000013488" description="Large ribosomal subunit protein bL34">
    <location>
        <begin position="1"/>
        <end position="46"/>
    </location>
</feature>
<reference key="1">
    <citation type="journal article" date="2015" name="Proc. Natl. Acad. Sci. U.S.A.">
        <title>Trichodesmium genome maintains abundant, widespread noncoding DNA in situ, despite oligotrophic lifestyle.</title>
        <authorList>
            <person name="Walworth N."/>
            <person name="Pfreundt U."/>
            <person name="Nelson W.C."/>
            <person name="Mincer T."/>
            <person name="Heidelberg J.F."/>
            <person name="Fu F."/>
            <person name="Waterbury J.B."/>
            <person name="Glavina del Rio T."/>
            <person name="Goodwin L."/>
            <person name="Kyrpides N.C."/>
            <person name="Land M.L."/>
            <person name="Woyke T."/>
            <person name="Hutchins D.A."/>
            <person name="Hess W.R."/>
            <person name="Webb E.A."/>
        </authorList>
    </citation>
    <scope>NUCLEOTIDE SEQUENCE [LARGE SCALE GENOMIC DNA]</scope>
    <source>
        <strain>IMS101</strain>
    </source>
</reference>
<protein>
    <recommendedName>
        <fullName evidence="1">Large ribosomal subunit protein bL34</fullName>
    </recommendedName>
    <alternativeName>
        <fullName evidence="2">50S ribosomal protein L34</fullName>
    </alternativeName>
</protein>
<proteinExistence type="inferred from homology"/>
<gene>
    <name evidence="1" type="primary">rpmH</name>
    <name evidence="1" type="synonym">rpl34</name>
    <name type="ordered locus">Tery_4707</name>
</gene>
<accession>Q10VQ4</accession>
<organism>
    <name type="scientific">Trichodesmium erythraeum (strain IMS101)</name>
    <dbReference type="NCBI Taxonomy" id="203124"/>
    <lineage>
        <taxon>Bacteria</taxon>
        <taxon>Bacillati</taxon>
        <taxon>Cyanobacteriota</taxon>
        <taxon>Cyanophyceae</taxon>
        <taxon>Oscillatoriophycideae</taxon>
        <taxon>Oscillatoriales</taxon>
        <taxon>Microcoleaceae</taxon>
        <taxon>Trichodesmium</taxon>
    </lineage>
</organism>